<keyword id="KW-0210">Decarboxylase</keyword>
<keyword id="KW-0456">Lyase</keyword>
<keyword id="KW-0460">Magnesium</keyword>
<keyword id="KW-0479">Metal-binding</keyword>
<keyword id="KW-0620">Polyamine biosynthesis</keyword>
<keyword id="KW-0663">Pyridoxal phosphate</keyword>
<keyword id="KW-1185">Reference proteome</keyword>
<keyword id="KW-0745">Spermidine biosynthesis</keyword>
<name>SPEA_XANCP</name>
<dbReference type="EC" id="4.1.1.19" evidence="1"/>
<dbReference type="EMBL" id="AE008922">
    <property type="protein sequence ID" value="AAM43099.1"/>
    <property type="status" value="ALT_INIT"/>
    <property type="molecule type" value="Genomic_DNA"/>
</dbReference>
<dbReference type="RefSeq" id="NP_639208.2">
    <property type="nucleotide sequence ID" value="NC_003902.1"/>
</dbReference>
<dbReference type="RefSeq" id="WP_011038943.1">
    <property type="nucleotide sequence ID" value="NC_003902.1"/>
</dbReference>
<dbReference type="SMR" id="Q8P448"/>
<dbReference type="STRING" id="190485.XCC3868"/>
<dbReference type="EnsemblBacteria" id="AAM43099">
    <property type="protein sequence ID" value="AAM43099"/>
    <property type="gene ID" value="XCC3868"/>
</dbReference>
<dbReference type="GeneID" id="58015160"/>
<dbReference type="KEGG" id="xcc:XCC3868"/>
<dbReference type="PATRIC" id="fig|190485.4.peg.4139"/>
<dbReference type="eggNOG" id="COG1166">
    <property type="taxonomic scope" value="Bacteria"/>
</dbReference>
<dbReference type="HOGENOM" id="CLU_027243_1_0_6"/>
<dbReference type="OrthoDB" id="9802658at2"/>
<dbReference type="Proteomes" id="UP000001010">
    <property type="component" value="Chromosome"/>
</dbReference>
<dbReference type="GO" id="GO:0008792">
    <property type="term" value="F:arginine decarboxylase activity"/>
    <property type="evidence" value="ECO:0000318"/>
    <property type="project" value="GO_Central"/>
</dbReference>
<dbReference type="GO" id="GO:0046872">
    <property type="term" value="F:metal ion binding"/>
    <property type="evidence" value="ECO:0007669"/>
    <property type="project" value="UniProtKB-KW"/>
</dbReference>
<dbReference type="GO" id="GO:0006527">
    <property type="term" value="P:arginine catabolic process"/>
    <property type="evidence" value="ECO:0007669"/>
    <property type="project" value="InterPro"/>
</dbReference>
<dbReference type="GO" id="GO:0033388">
    <property type="term" value="P:putrescine biosynthetic process from arginine"/>
    <property type="evidence" value="ECO:0000318"/>
    <property type="project" value="GO_Central"/>
</dbReference>
<dbReference type="GO" id="GO:0008295">
    <property type="term" value="P:spermidine biosynthetic process"/>
    <property type="evidence" value="ECO:0007669"/>
    <property type="project" value="UniProtKB-UniRule"/>
</dbReference>
<dbReference type="CDD" id="cd06830">
    <property type="entry name" value="PLPDE_III_ADC"/>
    <property type="match status" value="1"/>
</dbReference>
<dbReference type="FunFam" id="1.20.58.930:FF:000004">
    <property type="entry name" value="Biosynthetic arginine decarboxylase"/>
    <property type="match status" value="1"/>
</dbReference>
<dbReference type="FunFam" id="3.20.20.10:FF:000001">
    <property type="entry name" value="Biosynthetic arginine decarboxylase"/>
    <property type="match status" value="1"/>
</dbReference>
<dbReference type="Gene3D" id="1.10.287.3440">
    <property type="match status" value="1"/>
</dbReference>
<dbReference type="Gene3D" id="1.20.58.930">
    <property type="match status" value="1"/>
</dbReference>
<dbReference type="Gene3D" id="3.20.20.10">
    <property type="entry name" value="Alanine racemase"/>
    <property type="match status" value="1"/>
</dbReference>
<dbReference type="Gene3D" id="2.40.37.10">
    <property type="entry name" value="Lyase, Ornithine Decarboxylase, Chain A, domain 1"/>
    <property type="match status" value="1"/>
</dbReference>
<dbReference type="HAMAP" id="MF_01417">
    <property type="entry name" value="SpeA"/>
    <property type="match status" value="1"/>
</dbReference>
<dbReference type="InterPro" id="IPR009006">
    <property type="entry name" value="Ala_racemase/Decarboxylase_C"/>
</dbReference>
<dbReference type="InterPro" id="IPR040634">
    <property type="entry name" value="Arg_decarb_HB"/>
</dbReference>
<dbReference type="InterPro" id="IPR041128">
    <property type="entry name" value="Arg_decarbox_C"/>
</dbReference>
<dbReference type="InterPro" id="IPR002985">
    <property type="entry name" value="Arg_decrbxlase"/>
</dbReference>
<dbReference type="InterPro" id="IPR022657">
    <property type="entry name" value="De-COase2_CS"/>
</dbReference>
<dbReference type="InterPro" id="IPR022644">
    <property type="entry name" value="De-COase2_N"/>
</dbReference>
<dbReference type="InterPro" id="IPR000183">
    <property type="entry name" value="Orn/DAP/Arg_de-COase"/>
</dbReference>
<dbReference type="InterPro" id="IPR029066">
    <property type="entry name" value="PLP-binding_barrel"/>
</dbReference>
<dbReference type="NCBIfam" id="NF003763">
    <property type="entry name" value="PRK05354.1"/>
    <property type="match status" value="1"/>
</dbReference>
<dbReference type="NCBIfam" id="TIGR01273">
    <property type="entry name" value="speA"/>
    <property type="match status" value="1"/>
</dbReference>
<dbReference type="PANTHER" id="PTHR43295">
    <property type="entry name" value="ARGININE DECARBOXYLASE"/>
    <property type="match status" value="1"/>
</dbReference>
<dbReference type="PANTHER" id="PTHR43295:SF9">
    <property type="entry name" value="BIOSYNTHETIC ARGININE DECARBOXYLASE"/>
    <property type="match status" value="1"/>
</dbReference>
<dbReference type="Pfam" id="PF17810">
    <property type="entry name" value="Arg_decarb_HB"/>
    <property type="match status" value="1"/>
</dbReference>
<dbReference type="Pfam" id="PF17944">
    <property type="entry name" value="Arg_decarbox_C"/>
    <property type="match status" value="1"/>
</dbReference>
<dbReference type="Pfam" id="PF02784">
    <property type="entry name" value="Orn_Arg_deC_N"/>
    <property type="match status" value="1"/>
</dbReference>
<dbReference type="PIRSF" id="PIRSF001336">
    <property type="entry name" value="Arg_decrbxlase"/>
    <property type="match status" value="1"/>
</dbReference>
<dbReference type="PRINTS" id="PR01180">
    <property type="entry name" value="ARGDCRBXLASE"/>
</dbReference>
<dbReference type="PRINTS" id="PR01179">
    <property type="entry name" value="ODADCRBXLASE"/>
</dbReference>
<dbReference type="SUPFAM" id="SSF50621">
    <property type="entry name" value="Alanine racemase C-terminal domain-like"/>
    <property type="match status" value="1"/>
</dbReference>
<dbReference type="SUPFAM" id="SSF51419">
    <property type="entry name" value="PLP-binding barrel"/>
    <property type="match status" value="1"/>
</dbReference>
<dbReference type="PROSITE" id="PS00879">
    <property type="entry name" value="ODR_DC_2_2"/>
    <property type="match status" value="1"/>
</dbReference>
<protein>
    <recommendedName>
        <fullName evidence="1">Biosynthetic arginine decarboxylase</fullName>
        <shortName evidence="1">ADC</shortName>
        <ecNumber evidence="1">4.1.1.19</ecNumber>
    </recommendedName>
</protein>
<organism>
    <name type="scientific">Xanthomonas campestris pv. campestris (strain ATCC 33913 / DSM 3586 / NCPPB 528 / LMG 568 / P 25)</name>
    <dbReference type="NCBI Taxonomy" id="190485"/>
    <lineage>
        <taxon>Bacteria</taxon>
        <taxon>Pseudomonadati</taxon>
        <taxon>Pseudomonadota</taxon>
        <taxon>Gammaproteobacteria</taxon>
        <taxon>Lysobacterales</taxon>
        <taxon>Lysobacteraceae</taxon>
        <taxon>Xanthomonas</taxon>
    </lineage>
</organism>
<evidence type="ECO:0000255" key="1">
    <source>
        <dbReference type="HAMAP-Rule" id="MF_01417"/>
    </source>
</evidence>
<evidence type="ECO:0000305" key="2"/>
<reference key="1">
    <citation type="journal article" date="2002" name="Nature">
        <title>Comparison of the genomes of two Xanthomonas pathogens with differing host specificities.</title>
        <authorList>
            <person name="da Silva A.C.R."/>
            <person name="Ferro J.A."/>
            <person name="Reinach F.C."/>
            <person name="Farah C.S."/>
            <person name="Furlan L.R."/>
            <person name="Quaggio R.B."/>
            <person name="Monteiro-Vitorello C.B."/>
            <person name="Van Sluys M.A."/>
            <person name="Almeida N.F. Jr."/>
            <person name="Alves L.M.C."/>
            <person name="do Amaral A.M."/>
            <person name="Bertolini M.C."/>
            <person name="Camargo L.E.A."/>
            <person name="Camarotte G."/>
            <person name="Cannavan F."/>
            <person name="Cardozo J."/>
            <person name="Chambergo F."/>
            <person name="Ciapina L.P."/>
            <person name="Cicarelli R.M.B."/>
            <person name="Coutinho L.L."/>
            <person name="Cursino-Santos J.R."/>
            <person name="El-Dorry H."/>
            <person name="Faria J.B."/>
            <person name="Ferreira A.J.S."/>
            <person name="Ferreira R.C.C."/>
            <person name="Ferro M.I.T."/>
            <person name="Formighieri E.F."/>
            <person name="Franco M.C."/>
            <person name="Greggio C.C."/>
            <person name="Gruber A."/>
            <person name="Katsuyama A.M."/>
            <person name="Kishi L.T."/>
            <person name="Leite R.P."/>
            <person name="Lemos E.G.M."/>
            <person name="Lemos M.V.F."/>
            <person name="Locali E.C."/>
            <person name="Machado M.A."/>
            <person name="Madeira A.M.B.N."/>
            <person name="Martinez-Rossi N.M."/>
            <person name="Martins E.C."/>
            <person name="Meidanis J."/>
            <person name="Menck C.F.M."/>
            <person name="Miyaki C.Y."/>
            <person name="Moon D.H."/>
            <person name="Moreira L.M."/>
            <person name="Novo M.T.M."/>
            <person name="Okura V.K."/>
            <person name="Oliveira M.C."/>
            <person name="Oliveira V.R."/>
            <person name="Pereira H.A."/>
            <person name="Rossi A."/>
            <person name="Sena J.A.D."/>
            <person name="Silva C."/>
            <person name="de Souza R.F."/>
            <person name="Spinola L.A.F."/>
            <person name="Takita M.A."/>
            <person name="Tamura R.E."/>
            <person name="Teixeira E.C."/>
            <person name="Tezza R.I.D."/>
            <person name="Trindade dos Santos M."/>
            <person name="Truffi D."/>
            <person name="Tsai S.M."/>
            <person name="White F.F."/>
            <person name="Setubal J.C."/>
            <person name="Kitajima J.P."/>
        </authorList>
    </citation>
    <scope>NUCLEOTIDE SEQUENCE [LARGE SCALE GENOMIC DNA]</scope>
    <source>
        <strain>ATCC 33913 / DSM 3586 / NCPPB 528 / LMG 568 / P 25</strain>
    </source>
</reference>
<sequence>MSDWSLDQARKTYSIPHWADGYFDVNDAGHVVVRPTADGPAVSLPEVVDAARAAGAKLPLLVRFPDILGQRLGKLQAAFAQAQADWDYAGGYTAVYPIKVNQHRGVAGTLASHHGEGFGLEAGSKPELMAVLALSRPGGLIVCNGYKDREYIRLALIGRKLGLQTFIVIEKPSELNLVLEEARALDVKPGLGVRMRLASLGAGKWQNSGGDKAKFGLSPRQVLDLWKSLRDTEYADSLNLLHFHMGSQISNVRDIANGMREATRYFVELSRLGAKISHVDVGGGLGIDYEGTRSRSYCSINYGLHSYASNIVQPLASACEEHGLPPPRIVTECGRAMTAHHAVLIANVSEVEQAPEGRVPDAHDDEPAAIRHLREIHDELDVRPAVELFQEAQHFHAEGLSAYALGQIDLTHRARIDDLFYAIAHGVRARLSFDEKSHRPVLDELNERLVDKYFVNFSVFESIPDVWAIDQVFPIVPIERLNEAPQRRGIIADMTCDSDGMVKTYVENESLDSSLPLHGLNPGESYRIGFFLVGAYQEILGDIHNLFGDTDAVEVAVDGTGYRIAQQRRGDTTDVMLDYVGYQLDTLRATYAERIAAAQLPPERAQELHDALEAGLTGYTYLSDEPLG</sequence>
<comment type="function">
    <text evidence="1">Catalyzes the biosynthesis of agmatine from arginine.</text>
</comment>
<comment type="catalytic activity">
    <reaction evidence="1">
        <text>L-arginine + H(+) = agmatine + CO2</text>
        <dbReference type="Rhea" id="RHEA:17641"/>
        <dbReference type="ChEBI" id="CHEBI:15378"/>
        <dbReference type="ChEBI" id="CHEBI:16526"/>
        <dbReference type="ChEBI" id="CHEBI:32682"/>
        <dbReference type="ChEBI" id="CHEBI:58145"/>
        <dbReference type="EC" id="4.1.1.19"/>
    </reaction>
</comment>
<comment type="cofactor">
    <cofactor evidence="1">
        <name>Mg(2+)</name>
        <dbReference type="ChEBI" id="CHEBI:18420"/>
    </cofactor>
</comment>
<comment type="cofactor">
    <cofactor evidence="1">
        <name>pyridoxal 5'-phosphate</name>
        <dbReference type="ChEBI" id="CHEBI:597326"/>
    </cofactor>
</comment>
<comment type="similarity">
    <text evidence="1">Belongs to the Orn/Lys/Arg decarboxylase class-II family. SpeA subfamily.</text>
</comment>
<comment type="sequence caution" evidence="2">
    <conflict type="erroneous initiation">
        <sequence resource="EMBL-CDS" id="AAM43099"/>
    </conflict>
</comment>
<proteinExistence type="inferred from homology"/>
<accession>Q8P448</accession>
<gene>
    <name evidence="1" type="primary">speA</name>
    <name type="ordered locus">XCC3868</name>
</gene>
<feature type="chain" id="PRO_0000149988" description="Biosynthetic arginine decarboxylase">
    <location>
        <begin position="1"/>
        <end position="628"/>
    </location>
</feature>
<feature type="binding site" evidence="1">
    <location>
        <begin position="279"/>
        <end position="289"/>
    </location>
    <ligand>
        <name>substrate</name>
    </ligand>
</feature>
<feature type="modified residue" description="N6-(pyridoxal phosphate)lysine" evidence="1">
    <location>
        <position position="99"/>
    </location>
</feature>